<organism>
    <name type="scientific">Homo sapiens</name>
    <name type="common">Human</name>
    <dbReference type="NCBI Taxonomy" id="9606"/>
    <lineage>
        <taxon>Eukaryota</taxon>
        <taxon>Metazoa</taxon>
        <taxon>Chordata</taxon>
        <taxon>Craniata</taxon>
        <taxon>Vertebrata</taxon>
        <taxon>Euteleostomi</taxon>
        <taxon>Mammalia</taxon>
        <taxon>Eutheria</taxon>
        <taxon>Euarchontoglires</taxon>
        <taxon>Primates</taxon>
        <taxon>Haplorrhini</taxon>
        <taxon>Catarrhini</taxon>
        <taxon>Hominidae</taxon>
        <taxon>Homo</taxon>
    </lineage>
</organism>
<evidence type="ECO:0000250" key="1">
    <source>
        <dbReference type="UniProtKB" id="P16664"/>
    </source>
</evidence>
<evidence type="ECO:0000269" key="2">
    <source>
    </source>
</evidence>
<evidence type="ECO:0000305" key="3"/>
<evidence type="ECO:0000312" key="4">
    <source>
        <dbReference type="HGNC" id="HGNC:21965"/>
    </source>
</evidence>
<sequence>MIEVVAELSRGPVFLAGEALECVVTVTNPLPPTATSASSEALAWASAQIHCQFHASESRVALPPPDSSQPDVQPDSQTVFLPHRGERGQCILSTPPKILFCDLRLDPGESKSYSYSEVLPIEGPPSFRGQSVKYVYKLTIGCQRVNSPITLLRVPLRVLVLTGLQDVRFPQDEAVAPSSPFLEEDEGGKKDSWLAELAGERLMAATSCRSLHLYNISDGRGKVGTFGIFKSVYRLGEDVVGTLNLGEGTVACLQFSVSLQTEERVQPEYQRRRGAGGVPSVSHVTHARHQESCLHTTRTSFSLPIPLSSTPGFCTAIVSLKWRLHFEFVTSREPGLVLLPPVEQPEPTTWTGPEQVPVDTFSWDLPIKVLPTSPTLASYAAPGPSTSTITI</sequence>
<feature type="chain" id="PRO_0000050741" description="RAB6A-GEF complex partner protein 2">
    <location>
        <begin position="1"/>
        <end position="391"/>
    </location>
</feature>
<name>RGP1_HUMAN</name>
<keyword id="KW-0963">Cytoplasm</keyword>
<keyword id="KW-0344">Guanine-nucleotide releasing factor</keyword>
<keyword id="KW-0472">Membrane</keyword>
<keyword id="KW-1267">Proteomics identification</keyword>
<keyword id="KW-1185">Reference proteome</keyword>
<gene>
    <name evidence="4" type="primary">RGP1</name>
    <name type="synonym">KIAA0258</name>
</gene>
<reference key="1">
    <citation type="journal article" date="1996" name="DNA Res.">
        <title>Prediction of the coding sequences of unidentified human genes. VI. The coding sequences of 80 new genes (KIAA0201-KIAA0280) deduced by analysis of cDNA clones from cell line KG-1 and brain.</title>
        <authorList>
            <person name="Nagase T."/>
            <person name="Seki N."/>
            <person name="Ishikawa K."/>
            <person name="Ohira M."/>
            <person name="Kawarabayasi Y."/>
            <person name="Ohara O."/>
            <person name="Tanaka A."/>
            <person name="Kotani H."/>
            <person name="Miyajima N."/>
            <person name="Nomura N."/>
        </authorList>
    </citation>
    <scope>NUCLEOTIDE SEQUENCE [LARGE SCALE MRNA]</scope>
    <source>
        <tissue>Bone marrow</tissue>
    </source>
</reference>
<reference key="2">
    <citation type="journal article" date="2004" name="Nature">
        <title>DNA sequence and analysis of human chromosome 9.</title>
        <authorList>
            <person name="Humphray S.J."/>
            <person name="Oliver K."/>
            <person name="Hunt A.R."/>
            <person name="Plumb R.W."/>
            <person name="Loveland J.E."/>
            <person name="Howe K.L."/>
            <person name="Andrews T.D."/>
            <person name="Searle S."/>
            <person name="Hunt S.E."/>
            <person name="Scott C.E."/>
            <person name="Jones M.C."/>
            <person name="Ainscough R."/>
            <person name="Almeida J.P."/>
            <person name="Ambrose K.D."/>
            <person name="Ashwell R.I.S."/>
            <person name="Babbage A.K."/>
            <person name="Babbage S."/>
            <person name="Bagguley C.L."/>
            <person name="Bailey J."/>
            <person name="Banerjee R."/>
            <person name="Barker D.J."/>
            <person name="Barlow K.F."/>
            <person name="Bates K."/>
            <person name="Beasley H."/>
            <person name="Beasley O."/>
            <person name="Bird C.P."/>
            <person name="Bray-Allen S."/>
            <person name="Brown A.J."/>
            <person name="Brown J.Y."/>
            <person name="Burford D."/>
            <person name="Burrill W."/>
            <person name="Burton J."/>
            <person name="Carder C."/>
            <person name="Carter N.P."/>
            <person name="Chapman J.C."/>
            <person name="Chen Y."/>
            <person name="Clarke G."/>
            <person name="Clark S.Y."/>
            <person name="Clee C.M."/>
            <person name="Clegg S."/>
            <person name="Collier R.E."/>
            <person name="Corby N."/>
            <person name="Crosier M."/>
            <person name="Cummings A.T."/>
            <person name="Davies J."/>
            <person name="Dhami P."/>
            <person name="Dunn M."/>
            <person name="Dutta I."/>
            <person name="Dyer L.W."/>
            <person name="Earthrowl M.E."/>
            <person name="Faulkner L."/>
            <person name="Fleming C.J."/>
            <person name="Frankish A."/>
            <person name="Frankland J.A."/>
            <person name="French L."/>
            <person name="Fricker D.G."/>
            <person name="Garner P."/>
            <person name="Garnett J."/>
            <person name="Ghori J."/>
            <person name="Gilbert J.G.R."/>
            <person name="Glison C."/>
            <person name="Grafham D.V."/>
            <person name="Gribble S."/>
            <person name="Griffiths C."/>
            <person name="Griffiths-Jones S."/>
            <person name="Grocock R."/>
            <person name="Guy J."/>
            <person name="Hall R.E."/>
            <person name="Hammond S."/>
            <person name="Harley J.L."/>
            <person name="Harrison E.S.I."/>
            <person name="Hart E.A."/>
            <person name="Heath P.D."/>
            <person name="Henderson C.D."/>
            <person name="Hopkins B.L."/>
            <person name="Howard P.J."/>
            <person name="Howden P.J."/>
            <person name="Huckle E."/>
            <person name="Johnson C."/>
            <person name="Johnson D."/>
            <person name="Joy A.A."/>
            <person name="Kay M."/>
            <person name="Keenan S."/>
            <person name="Kershaw J.K."/>
            <person name="Kimberley A.M."/>
            <person name="King A."/>
            <person name="Knights A."/>
            <person name="Laird G.K."/>
            <person name="Langford C."/>
            <person name="Lawlor S."/>
            <person name="Leongamornlert D.A."/>
            <person name="Leversha M."/>
            <person name="Lloyd C."/>
            <person name="Lloyd D.M."/>
            <person name="Lovell J."/>
            <person name="Martin S."/>
            <person name="Mashreghi-Mohammadi M."/>
            <person name="Matthews L."/>
            <person name="McLaren S."/>
            <person name="McLay K.E."/>
            <person name="McMurray A."/>
            <person name="Milne S."/>
            <person name="Nickerson T."/>
            <person name="Nisbett J."/>
            <person name="Nordsiek G."/>
            <person name="Pearce A.V."/>
            <person name="Peck A.I."/>
            <person name="Porter K.M."/>
            <person name="Pandian R."/>
            <person name="Pelan S."/>
            <person name="Phillimore B."/>
            <person name="Povey S."/>
            <person name="Ramsey Y."/>
            <person name="Rand V."/>
            <person name="Scharfe M."/>
            <person name="Sehra H.K."/>
            <person name="Shownkeen R."/>
            <person name="Sims S.K."/>
            <person name="Skuce C.D."/>
            <person name="Smith M."/>
            <person name="Steward C.A."/>
            <person name="Swarbreck D."/>
            <person name="Sycamore N."/>
            <person name="Tester J."/>
            <person name="Thorpe A."/>
            <person name="Tracey A."/>
            <person name="Tromans A."/>
            <person name="Thomas D.W."/>
            <person name="Wall M."/>
            <person name="Wallis J.M."/>
            <person name="West A.P."/>
            <person name="Whitehead S.L."/>
            <person name="Willey D.L."/>
            <person name="Williams S.A."/>
            <person name="Wilming L."/>
            <person name="Wray P.W."/>
            <person name="Young L."/>
            <person name="Ashurst J.L."/>
            <person name="Coulson A."/>
            <person name="Blocker H."/>
            <person name="Durbin R.M."/>
            <person name="Sulston J.E."/>
            <person name="Hubbard T."/>
            <person name="Jackson M.J."/>
            <person name="Bentley D.R."/>
            <person name="Beck S."/>
            <person name="Rogers J."/>
            <person name="Dunham I."/>
        </authorList>
    </citation>
    <scope>NUCLEOTIDE SEQUENCE [LARGE SCALE GENOMIC DNA]</scope>
</reference>
<reference key="3">
    <citation type="submission" date="2005-09" db="EMBL/GenBank/DDBJ databases">
        <authorList>
            <person name="Mural R.J."/>
            <person name="Istrail S."/>
            <person name="Sutton G.G."/>
            <person name="Florea L."/>
            <person name="Halpern A.L."/>
            <person name="Mobarry C.M."/>
            <person name="Lippert R."/>
            <person name="Walenz B."/>
            <person name="Shatkay H."/>
            <person name="Dew I."/>
            <person name="Miller J.R."/>
            <person name="Flanigan M.J."/>
            <person name="Edwards N.J."/>
            <person name="Bolanos R."/>
            <person name="Fasulo D."/>
            <person name="Halldorsson B.V."/>
            <person name="Hannenhalli S."/>
            <person name="Turner R."/>
            <person name="Yooseph S."/>
            <person name="Lu F."/>
            <person name="Nusskern D.R."/>
            <person name="Shue B.C."/>
            <person name="Zheng X.H."/>
            <person name="Zhong F."/>
            <person name="Delcher A.L."/>
            <person name="Huson D.H."/>
            <person name="Kravitz S.A."/>
            <person name="Mouchard L."/>
            <person name="Reinert K."/>
            <person name="Remington K.A."/>
            <person name="Clark A.G."/>
            <person name="Waterman M.S."/>
            <person name="Eichler E.E."/>
            <person name="Adams M.D."/>
            <person name="Hunkapiller M.W."/>
            <person name="Myers E.W."/>
            <person name="Venter J.C."/>
        </authorList>
    </citation>
    <scope>NUCLEOTIDE SEQUENCE [LARGE SCALE GENOMIC DNA]</scope>
</reference>
<reference key="4">
    <citation type="journal article" date="2004" name="Genome Res.">
        <title>The status, quality, and expansion of the NIH full-length cDNA project: the Mammalian Gene Collection (MGC).</title>
        <authorList>
            <consortium name="The MGC Project Team"/>
        </authorList>
    </citation>
    <scope>NUCLEOTIDE SEQUENCE [LARGE SCALE MRNA]</scope>
    <source>
        <tissue>Lung</tissue>
    </source>
</reference>
<reference key="5">
    <citation type="journal article" date="2012" name="J. Biol. Chem.">
        <title>Ric1-Rgp1 complex is a guanine nucleotide exchange factor for the late Golgi Rab6A GTPase and an effector of the medial Golgi Rab33B GTPase.</title>
        <authorList>
            <person name="Pusapati G.V."/>
            <person name="Luchetti G."/>
            <person name="Pfeffer S.R."/>
        </authorList>
    </citation>
    <scope>FUNCTION</scope>
    <scope>SUBCELLULAR LOCATION</scope>
    <scope>INTERACTION WITH RIC1; RAB33B AND RAB6A</scope>
</reference>
<reference key="6">
    <citation type="journal article" date="2012" name="Proc. Natl. Acad. Sci. U.S.A.">
        <title>N-terminal acetylome analyses and functional insights of the N-terminal acetyltransferase NatB.</title>
        <authorList>
            <person name="Van Damme P."/>
            <person name="Lasa M."/>
            <person name="Polevoda B."/>
            <person name="Gazquez C."/>
            <person name="Elosegui-Artola A."/>
            <person name="Kim D.S."/>
            <person name="De Juan-Pardo E."/>
            <person name="Demeyer K."/>
            <person name="Hole K."/>
            <person name="Larrea E."/>
            <person name="Timmerman E."/>
            <person name="Prieto J."/>
            <person name="Arnesen T."/>
            <person name="Sherman F."/>
            <person name="Gevaert K."/>
            <person name="Aldabe R."/>
        </authorList>
    </citation>
    <scope>IDENTIFICATION BY MASS SPECTROMETRY [LARGE SCALE ANALYSIS]</scope>
</reference>
<proteinExistence type="evidence at protein level"/>
<comment type="function">
    <text evidence="2">The RIC1-RGP1 complex acts as a guanine nucleotide exchange factor (GEF), which activates RAB6A by exchanging bound GDP for free GTP and may thereby required for efficient fusion of endosome-derived vesicles with the Golgi compartment. The RIC1-RGP1 complex participates in the recycling of mannose-6-phosphate receptors.</text>
</comment>
<comment type="subunit">
    <text evidence="2">Forms a complex with RIC1; the interaction enhances RAB6A GTPase activity. Interacts with RIC1. Interacts with RAB6A; the interaction is direct with a preference for RAB6A-GDP. Interacts with RAB33B.</text>
</comment>
<comment type="interaction">
    <interactant intactId="EBI-2823702">
        <id>Q92546</id>
    </interactant>
    <interactant intactId="EBI-10188956">
        <id>O75679</id>
        <label>RFPL3</label>
    </interactant>
    <organismsDiffer>false</organismsDiffer>
    <experiments>3</experiments>
</comment>
<comment type="interaction">
    <interactant intactId="EBI-2823702">
        <id>Q92546</id>
    </interactant>
    <interactant intactId="EBI-9675698">
        <id>P14079</id>
        <label>tax</label>
    </interactant>
    <organismsDiffer>true</organismsDiffer>
    <experiments>3</experiments>
</comment>
<comment type="subcellular location">
    <subcellularLocation>
        <location evidence="2">Cytoplasm</location>
        <location evidence="2">Cytosol</location>
    </subcellularLocation>
    <subcellularLocation>
        <location evidence="2">Membrane</location>
    </subcellularLocation>
</comment>
<comment type="similarity">
    <text evidence="3">Belongs to the RGP1 family.</text>
</comment>
<comment type="sequence caution" evidence="3">
    <conflict type="erroneous initiation">
        <sequence resource="EMBL-CDS" id="BAA13388"/>
    </conflict>
</comment>
<protein>
    <recommendedName>
        <fullName evidence="3">RAB6A-GEF complex partner protein 2</fullName>
    </recommendedName>
    <alternativeName>
        <fullName evidence="1">Retrograde Golgi transport protein RGP1 homolog</fullName>
    </alternativeName>
</protein>
<dbReference type="EMBL" id="D87447">
    <property type="protein sequence ID" value="BAA13388.2"/>
    <property type="status" value="ALT_INIT"/>
    <property type="molecule type" value="mRNA"/>
</dbReference>
<dbReference type="EMBL" id="AL133410">
    <property type="status" value="NOT_ANNOTATED_CDS"/>
    <property type="molecule type" value="Genomic_DNA"/>
</dbReference>
<dbReference type="EMBL" id="CH471071">
    <property type="protein sequence ID" value="EAW58343.1"/>
    <property type="molecule type" value="Genomic_DNA"/>
</dbReference>
<dbReference type="EMBL" id="BC001725">
    <property type="protein sequence ID" value="AAH01725.1"/>
    <property type="molecule type" value="mRNA"/>
</dbReference>
<dbReference type="CCDS" id="CCDS47964.2"/>
<dbReference type="RefSeq" id="NP_001073965.2">
    <property type="nucleotide sequence ID" value="NM_001080496.3"/>
</dbReference>
<dbReference type="BioGRID" id="115165">
    <property type="interactions" value="22"/>
</dbReference>
<dbReference type="ComplexPortal" id="CPX-25521">
    <property type="entry name" value="RIC1-RGP1 guanyl-nucleotide exchange factor complex"/>
</dbReference>
<dbReference type="CORUM" id="Q92546"/>
<dbReference type="FunCoup" id="Q92546">
    <property type="interactions" value="1792"/>
</dbReference>
<dbReference type="IntAct" id="Q92546">
    <property type="interactions" value="15"/>
</dbReference>
<dbReference type="MINT" id="Q92546"/>
<dbReference type="STRING" id="9606.ENSP00000367318"/>
<dbReference type="GlyGen" id="Q92546">
    <property type="glycosylation" value="1 site"/>
</dbReference>
<dbReference type="iPTMnet" id="Q92546"/>
<dbReference type="PhosphoSitePlus" id="Q92546"/>
<dbReference type="BioMuta" id="RGP1"/>
<dbReference type="DMDM" id="2495728"/>
<dbReference type="jPOST" id="Q92546"/>
<dbReference type="MassIVE" id="Q92546"/>
<dbReference type="PaxDb" id="9606-ENSP00000367318"/>
<dbReference type="PeptideAtlas" id="Q92546"/>
<dbReference type="ProteomicsDB" id="75307"/>
<dbReference type="Pumba" id="Q92546"/>
<dbReference type="Antibodypedia" id="5650">
    <property type="antibodies" value="109 antibodies from 26 providers"/>
</dbReference>
<dbReference type="DNASU" id="9827"/>
<dbReference type="Ensembl" id="ENST00000378078.5">
    <property type="protein sequence ID" value="ENSP00000367318.4"/>
    <property type="gene ID" value="ENSG00000107185.10"/>
</dbReference>
<dbReference type="GeneID" id="9827"/>
<dbReference type="KEGG" id="hsa:9827"/>
<dbReference type="MANE-Select" id="ENST00000378078.5">
    <property type="protein sequence ID" value="ENSP00000367318.4"/>
    <property type="RefSeq nucleotide sequence ID" value="NM_001080496.3"/>
    <property type="RefSeq protein sequence ID" value="NP_001073965.2"/>
</dbReference>
<dbReference type="UCSC" id="uc011lpf.3">
    <property type="organism name" value="human"/>
</dbReference>
<dbReference type="AGR" id="HGNC:21965"/>
<dbReference type="CTD" id="9827"/>
<dbReference type="DisGeNET" id="9827"/>
<dbReference type="GeneCards" id="RGP1"/>
<dbReference type="HGNC" id="HGNC:21965">
    <property type="gene designation" value="RGP1"/>
</dbReference>
<dbReference type="HPA" id="ENSG00000107185">
    <property type="expression patterns" value="Low tissue specificity"/>
</dbReference>
<dbReference type="MIM" id="615742">
    <property type="type" value="gene"/>
</dbReference>
<dbReference type="neXtProt" id="NX_Q92546"/>
<dbReference type="OpenTargets" id="ENSG00000107185"/>
<dbReference type="VEuPathDB" id="HostDB:ENSG00000107185"/>
<dbReference type="eggNOG" id="KOG4469">
    <property type="taxonomic scope" value="Eukaryota"/>
</dbReference>
<dbReference type="GeneTree" id="ENSGT00390000006136"/>
<dbReference type="HOGENOM" id="CLU_060334_0_0_1"/>
<dbReference type="InParanoid" id="Q92546"/>
<dbReference type="OMA" id="CQVRCVQ"/>
<dbReference type="OrthoDB" id="1918at2759"/>
<dbReference type="PAN-GO" id="Q92546">
    <property type="GO annotations" value="3 GO annotations based on evolutionary models"/>
</dbReference>
<dbReference type="PhylomeDB" id="Q92546"/>
<dbReference type="TreeFam" id="TF313879"/>
<dbReference type="PathwayCommons" id="Q92546"/>
<dbReference type="Reactome" id="R-HSA-6811438">
    <property type="pathway name" value="Intra-Golgi traffic"/>
</dbReference>
<dbReference type="Reactome" id="R-HSA-6811440">
    <property type="pathway name" value="Retrograde transport at the Trans-Golgi-Network"/>
</dbReference>
<dbReference type="Reactome" id="R-HSA-8876198">
    <property type="pathway name" value="RAB GEFs exchange GTP for GDP on RABs"/>
</dbReference>
<dbReference type="SignaLink" id="Q92546"/>
<dbReference type="BioGRID-ORCS" id="9827">
    <property type="hits" value="253 hits in 1157 CRISPR screens"/>
</dbReference>
<dbReference type="ChiTaRS" id="RGP1">
    <property type="organism name" value="human"/>
</dbReference>
<dbReference type="GenomeRNAi" id="9827"/>
<dbReference type="Pharos" id="Q92546">
    <property type="development level" value="Tbio"/>
</dbReference>
<dbReference type="PRO" id="PR:Q92546"/>
<dbReference type="Proteomes" id="UP000005640">
    <property type="component" value="Chromosome 9"/>
</dbReference>
<dbReference type="RNAct" id="Q92546">
    <property type="molecule type" value="protein"/>
</dbReference>
<dbReference type="Bgee" id="ENSG00000107185">
    <property type="expression patterns" value="Expressed in tendon of biceps brachii and 209 other cell types or tissues"/>
</dbReference>
<dbReference type="GO" id="GO:0005829">
    <property type="term" value="C:cytosol"/>
    <property type="evidence" value="ECO:0000314"/>
    <property type="project" value="UniProtKB"/>
</dbReference>
<dbReference type="GO" id="GO:0000139">
    <property type="term" value="C:Golgi membrane"/>
    <property type="evidence" value="ECO:0000318"/>
    <property type="project" value="GO_Central"/>
</dbReference>
<dbReference type="GO" id="GO:0016020">
    <property type="term" value="C:membrane"/>
    <property type="evidence" value="ECO:0000314"/>
    <property type="project" value="UniProtKB"/>
</dbReference>
<dbReference type="GO" id="GO:0005886">
    <property type="term" value="C:plasma membrane"/>
    <property type="evidence" value="ECO:0000314"/>
    <property type="project" value="HPA"/>
</dbReference>
<dbReference type="GO" id="GO:0032991">
    <property type="term" value="C:protein-containing complex"/>
    <property type="evidence" value="ECO:0000314"/>
    <property type="project" value="UniProtKB"/>
</dbReference>
<dbReference type="GO" id="GO:0034066">
    <property type="term" value="C:Ric1-Rgp1 guanyl-nucleotide exchange factor complex"/>
    <property type="evidence" value="ECO:0000314"/>
    <property type="project" value="UniProtKB"/>
</dbReference>
<dbReference type="GO" id="GO:0032588">
    <property type="term" value="C:trans-Golgi network membrane"/>
    <property type="evidence" value="ECO:0000304"/>
    <property type="project" value="Reactome"/>
</dbReference>
<dbReference type="GO" id="GO:0005085">
    <property type="term" value="F:guanyl-nucleotide exchange factor activity"/>
    <property type="evidence" value="ECO:0000314"/>
    <property type="project" value="UniProtKB"/>
</dbReference>
<dbReference type="GO" id="GO:0031267">
    <property type="term" value="F:small GTPase binding"/>
    <property type="evidence" value="ECO:0000314"/>
    <property type="project" value="UniProtKB"/>
</dbReference>
<dbReference type="GO" id="GO:0042177">
    <property type="term" value="P:negative regulation of protein catabolic process"/>
    <property type="evidence" value="ECO:0000315"/>
    <property type="project" value="UniProtKB"/>
</dbReference>
<dbReference type="GO" id="GO:0043547">
    <property type="term" value="P:positive regulation of GTPase activity"/>
    <property type="evidence" value="ECO:0000314"/>
    <property type="project" value="UniProtKB"/>
</dbReference>
<dbReference type="GO" id="GO:0042147">
    <property type="term" value="P:retrograde transport, endosome to Golgi"/>
    <property type="evidence" value="ECO:0000315"/>
    <property type="project" value="UniProtKB"/>
</dbReference>
<dbReference type="InterPro" id="IPR014848">
    <property type="entry name" value="Rgp1"/>
</dbReference>
<dbReference type="PANTHER" id="PTHR12507">
    <property type="entry name" value="REDUCED GROWTH PHENOTYPE 1 RGP1, YEAST -RELATED"/>
    <property type="match status" value="1"/>
</dbReference>
<dbReference type="Pfam" id="PF08737">
    <property type="entry name" value="Rgp1"/>
    <property type="match status" value="2"/>
</dbReference>
<accession>Q92546</accession>
<accession>Q5TCV5</accession>